<name>TIG_GEOUR</name>
<evidence type="ECO:0000255" key="1">
    <source>
        <dbReference type="HAMAP-Rule" id="MF_00303"/>
    </source>
</evidence>
<sequence length="433" mass="49178">MRINVESLSSIKKKINFEIPSERVASEVEKAYGEIRKHAAIKGFRKGKVPKDLLVKHFSDKMADDVLKNIINDTYFKALMDENIYPVSHPVIESDELKVGESFKYSATVEIFPDVVVKDYTGLEVKKEKYVFNEEVIANRLKEMQENMSHLEPADAQHSAMNGDFVTFDFKGFVGGEPFDGGAAEDYQLELGSGRFIPGFEDQIVGMKVGDEGEIKVTFPENYGQKDLAGKEATFAVTIKEIKVKELPELNDDFAKDFGEFESLDQLKAKISEVYALQENERIETELRERLIKALIDKNNFEVPETLIDKQLNLMLENSKKRLAMQRLTMEMMGLNDEGYKIQFRSVAETQVKGSLLLEALARQESIQVADDDLDAKIKEIAAQNNQELETVNNFYQQNAQAKENLTAQLKEDKVVDFLLAKAKIDEVDRSEI</sequence>
<protein>
    <recommendedName>
        <fullName evidence="1">Trigger factor</fullName>
        <shortName evidence="1">TF</shortName>
        <ecNumber evidence="1">5.2.1.8</ecNumber>
    </recommendedName>
    <alternativeName>
        <fullName evidence="1">PPIase</fullName>
    </alternativeName>
</protein>
<accession>A5GF99</accession>
<feature type="chain" id="PRO_1000079041" description="Trigger factor">
    <location>
        <begin position="1"/>
        <end position="433"/>
    </location>
</feature>
<feature type="domain" description="PPIase FKBP-type" evidence="1">
    <location>
        <begin position="163"/>
        <end position="248"/>
    </location>
</feature>
<proteinExistence type="inferred from homology"/>
<keyword id="KW-0131">Cell cycle</keyword>
<keyword id="KW-0132">Cell division</keyword>
<keyword id="KW-0143">Chaperone</keyword>
<keyword id="KW-0963">Cytoplasm</keyword>
<keyword id="KW-0413">Isomerase</keyword>
<keyword id="KW-1185">Reference proteome</keyword>
<keyword id="KW-0697">Rotamase</keyword>
<organism>
    <name type="scientific">Geotalea uraniireducens (strain Rf4)</name>
    <name type="common">Geobacter uraniireducens</name>
    <dbReference type="NCBI Taxonomy" id="351605"/>
    <lineage>
        <taxon>Bacteria</taxon>
        <taxon>Pseudomonadati</taxon>
        <taxon>Thermodesulfobacteriota</taxon>
        <taxon>Desulfuromonadia</taxon>
        <taxon>Geobacterales</taxon>
        <taxon>Geobacteraceae</taxon>
        <taxon>Geotalea</taxon>
    </lineage>
</organism>
<comment type="function">
    <text evidence="1">Involved in protein export. Acts as a chaperone by maintaining the newly synthesized protein in an open conformation. Functions as a peptidyl-prolyl cis-trans isomerase.</text>
</comment>
<comment type="catalytic activity">
    <reaction evidence="1">
        <text>[protein]-peptidylproline (omega=180) = [protein]-peptidylproline (omega=0)</text>
        <dbReference type="Rhea" id="RHEA:16237"/>
        <dbReference type="Rhea" id="RHEA-COMP:10747"/>
        <dbReference type="Rhea" id="RHEA-COMP:10748"/>
        <dbReference type="ChEBI" id="CHEBI:83833"/>
        <dbReference type="ChEBI" id="CHEBI:83834"/>
        <dbReference type="EC" id="5.2.1.8"/>
    </reaction>
</comment>
<comment type="subcellular location">
    <subcellularLocation>
        <location>Cytoplasm</location>
    </subcellularLocation>
    <text evidence="1">About half TF is bound to the ribosome near the polypeptide exit tunnel while the other half is free in the cytoplasm.</text>
</comment>
<comment type="domain">
    <text evidence="1">Consists of 3 domains; the N-terminus binds the ribosome, the middle domain has PPIase activity, while the C-terminus has intrinsic chaperone activity on its own.</text>
</comment>
<comment type="similarity">
    <text evidence="1">Belongs to the FKBP-type PPIase family. Tig subfamily.</text>
</comment>
<dbReference type="EC" id="5.2.1.8" evidence="1"/>
<dbReference type="EMBL" id="CP000698">
    <property type="protein sequence ID" value="ABQ26104.1"/>
    <property type="molecule type" value="Genomic_DNA"/>
</dbReference>
<dbReference type="RefSeq" id="WP_011938807.1">
    <property type="nucleotide sequence ID" value="NC_009483.1"/>
</dbReference>
<dbReference type="SMR" id="A5GF99"/>
<dbReference type="STRING" id="351605.Gura_1914"/>
<dbReference type="KEGG" id="gur:Gura_1914"/>
<dbReference type="HOGENOM" id="CLU_033058_3_2_7"/>
<dbReference type="OrthoDB" id="9767721at2"/>
<dbReference type="Proteomes" id="UP000006695">
    <property type="component" value="Chromosome"/>
</dbReference>
<dbReference type="GO" id="GO:0005737">
    <property type="term" value="C:cytoplasm"/>
    <property type="evidence" value="ECO:0007669"/>
    <property type="project" value="UniProtKB-SubCell"/>
</dbReference>
<dbReference type="GO" id="GO:0003755">
    <property type="term" value="F:peptidyl-prolyl cis-trans isomerase activity"/>
    <property type="evidence" value="ECO:0007669"/>
    <property type="project" value="UniProtKB-UniRule"/>
</dbReference>
<dbReference type="GO" id="GO:0044183">
    <property type="term" value="F:protein folding chaperone"/>
    <property type="evidence" value="ECO:0007669"/>
    <property type="project" value="TreeGrafter"/>
</dbReference>
<dbReference type="GO" id="GO:0043022">
    <property type="term" value="F:ribosome binding"/>
    <property type="evidence" value="ECO:0007669"/>
    <property type="project" value="TreeGrafter"/>
</dbReference>
<dbReference type="GO" id="GO:0051083">
    <property type="term" value="P:'de novo' cotranslational protein folding"/>
    <property type="evidence" value="ECO:0007669"/>
    <property type="project" value="TreeGrafter"/>
</dbReference>
<dbReference type="GO" id="GO:0051301">
    <property type="term" value="P:cell division"/>
    <property type="evidence" value="ECO:0007669"/>
    <property type="project" value="UniProtKB-KW"/>
</dbReference>
<dbReference type="GO" id="GO:0061077">
    <property type="term" value="P:chaperone-mediated protein folding"/>
    <property type="evidence" value="ECO:0007669"/>
    <property type="project" value="TreeGrafter"/>
</dbReference>
<dbReference type="GO" id="GO:0015031">
    <property type="term" value="P:protein transport"/>
    <property type="evidence" value="ECO:0007669"/>
    <property type="project" value="UniProtKB-UniRule"/>
</dbReference>
<dbReference type="GO" id="GO:0043335">
    <property type="term" value="P:protein unfolding"/>
    <property type="evidence" value="ECO:0007669"/>
    <property type="project" value="TreeGrafter"/>
</dbReference>
<dbReference type="FunFam" id="3.10.50.40:FF:000001">
    <property type="entry name" value="Trigger factor"/>
    <property type="match status" value="1"/>
</dbReference>
<dbReference type="Gene3D" id="3.10.50.40">
    <property type="match status" value="1"/>
</dbReference>
<dbReference type="Gene3D" id="3.30.70.1050">
    <property type="entry name" value="Trigger factor ribosome-binding domain"/>
    <property type="match status" value="1"/>
</dbReference>
<dbReference type="Gene3D" id="1.10.3120.10">
    <property type="entry name" value="Trigger factor, C-terminal domain"/>
    <property type="match status" value="1"/>
</dbReference>
<dbReference type="HAMAP" id="MF_00303">
    <property type="entry name" value="Trigger_factor_Tig"/>
    <property type="match status" value="1"/>
</dbReference>
<dbReference type="InterPro" id="IPR046357">
    <property type="entry name" value="PPIase_dom_sf"/>
</dbReference>
<dbReference type="InterPro" id="IPR001179">
    <property type="entry name" value="PPIase_FKBP_dom"/>
</dbReference>
<dbReference type="InterPro" id="IPR005215">
    <property type="entry name" value="Trig_fac"/>
</dbReference>
<dbReference type="InterPro" id="IPR008880">
    <property type="entry name" value="Trigger_fac_C"/>
</dbReference>
<dbReference type="InterPro" id="IPR037041">
    <property type="entry name" value="Trigger_fac_C_sf"/>
</dbReference>
<dbReference type="InterPro" id="IPR008881">
    <property type="entry name" value="Trigger_fac_ribosome-bd_bac"/>
</dbReference>
<dbReference type="InterPro" id="IPR036611">
    <property type="entry name" value="Trigger_fac_ribosome-bd_sf"/>
</dbReference>
<dbReference type="InterPro" id="IPR027304">
    <property type="entry name" value="Trigger_fact/SurA_dom_sf"/>
</dbReference>
<dbReference type="NCBIfam" id="TIGR00115">
    <property type="entry name" value="tig"/>
    <property type="match status" value="1"/>
</dbReference>
<dbReference type="PANTHER" id="PTHR30560">
    <property type="entry name" value="TRIGGER FACTOR CHAPERONE AND PEPTIDYL-PROLYL CIS/TRANS ISOMERASE"/>
    <property type="match status" value="1"/>
</dbReference>
<dbReference type="PANTHER" id="PTHR30560:SF3">
    <property type="entry name" value="TRIGGER FACTOR-LIKE PROTEIN TIG, CHLOROPLASTIC"/>
    <property type="match status" value="1"/>
</dbReference>
<dbReference type="Pfam" id="PF00254">
    <property type="entry name" value="FKBP_C"/>
    <property type="match status" value="1"/>
</dbReference>
<dbReference type="Pfam" id="PF05698">
    <property type="entry name" value="Trigger_C"/>
    <property type="match status" value="1"/>
</dbReference>
<dbReference type="Pfam" id="PF05697">
    <property type="entry name" value="Trigger_N"/>
    <property type="match status" value="1"/>
</dbReference>
<dbReference type="PIRSF" id="PIRSF003095">
    <property type="entry name" value="Trigger_factor"/>
    <property type="match status" value="1"/>
</dbReference>
<dbReference type="SUPFAM" id="SSF54534">
    <property type="entry name" value="FKBP-like"/>
    <property type="match status" value="1"/>
</dbReference>
<dbReference type="SUPFAM" id="SSF109998">
    <property type="entry name" value="Triger factor/SurA peptide-binding domain-like"/>
    <property type="match status" value="1"/>
</dbReference>
<dbReference type="SUPFAM" id="SSF102735">
    <property type="entry name" value="Trigger factor ribosome-binding domain"/>
    <property type="match status" value="1"/>
</dbReference>
<dbReference type="PROSITE" id="PS50059">
    <property type="entry name" value="FKBP_PPIASE"/>
    <property type="match status" value="1"/>
</dbReference>
<reference key="1">
    <citation type="submission" date="2007-05" db="EMBL/GenBank/DDBJ databases">
        <title>Complete sequence of Geobacter uraniireducens Rf4.</title>
        <authorList>
            <consortium name="US DOE Joint Genome Institute"/>
            <person name="Copeland A."/>
            <person name="Lucas S."/>
            <person name="Lapidus A."/>
            <person name="Barry K."/>
            <person name="Detter J.C."/>
            <person name="Glavina del Rio T."/>
            <person name="Hammon N."/>
            <person name="Israni S."/>
            <person name="Dalin E."/>
            <person name="Tice H."/>
            <person name="Pitluck S."/>
            <person name="Chertkov O."/>
            <person name="Brettin T."/>
            <person name="Bruce D."/>
            <person name="Han C."/>
            <person name="Schmutz J."/>
            <person name="Larimer F."/>
            <person name="Land M."/>
            <person name="Hauser L."/>
            <person name="Kyrpides N."/>
            <person name="Mikhailova N."/>
            <person name="Shelobolina E."/>
            <person name="Aklujkar M."/>
            <person name="Lovley D."/>
            <person name="Richardson P."/>
        </authorList>
    </citation>
    <scope>NUCLEOTIDE SEQUENCE [LARGE SCALE GENOMIC DNA]</scope>
    <source>
        <strain>ATCC BAA-1134 / JCM 13001 / Rf4</strain>
    </source>
</reference>
<gene>
    <name evidence="1" type="primary">tig</name>
    <name type="ordered locus">Gura_1914</name>
</gene>